<feature type="transit peptide" description="Mitochondrion" evidence="1">
    <location>
        <begin position="1"/>
        <end position="34"/>
    </location>
</feature>
<feature type="chain" id="PRO_0000443713" description="Small ribosomal subunit protein uS9m">
    <location>
        <begin position="35"/>
        <end position="430"/>
    </location>
</feature>
<feature type="region of interest" description="Disordered" evidence="2">
    <location>
        <begin position="32"/>
        <end position="97"/>
    </location>
</feature>
<feature type="compositionally biased region" description="Gly residues" evidence="2">
    <location>
        <begin position="39"/>
        <end position="48"/>
    </location>
</feature>
<feature type="compositionally biased region" description="Low complexity" evidence="2">
    <location>
        <begin position="68"/>
        <end position="79"/>
    </location>
</feature>
<feature type="compositionally biased region" description="Gly residues" evidence="2">
    <location>
        <begin position="80"/>
        <end position="91"/>
    </location>
</feature>
<feature type="sequence conflict" description="In Ref. 4; BAD44424." evidence="6" ref="4">
    <original>V</original>
    <variation>G</variation>
    <location>
        <position position="165"/>
    </location>
</feature>
<reference key="1">
    <citation type="journal article" date="2000" name="Nature">
        <title>Sequence and analysis of chromosome 3 of the plant Arabidopsis thaliana.</title>
        <authorList>
            <person name="Salanoubat M."/>
            <person name="Lemcke K."/>
            <person name="Rieger M."/>
            <person name="Ansorge W."/>
            <person name="Unseld M."/>
            <person name="Fartmann B."/>
            <person name="Valle G."/>
            <person name="Bloecker H."/>
            <person name="Perez-Alonso M."/>
            <person name="Obermaier B."/>
            <person name="Delseny M."/>
            <person name="Boutry M."/>
            <person name="Grivell L.A."/>
            <person name="Mache R."/>
            <person name="Puigdomenech P."/>
            <person name="De Simone V."/>
            <person name="Choisne N."/>
            <person name="Artiguenave F."/>
            <person name="Robert C."/>
            <person name="Brottier P."/>
            <person name="Wincker P."/>
            <person name="Cattolico L."/>
            <person name="Weissenbach J."/>
            <person name="Saurin W."/>
            <person name="Quetier F."/>
            <person name="Schaefer M."/>
            <person name="Mueller-Auer S."/>
            <person name="Gabel C."/>
            <person name="Fuchs M."/>
            <person name="Benes V."/>
            <person name="Wurmbach E."/>
            <person name="Drzonek H."/>
            <person name="Erfle H."/>
            <person name="Jordan N."/>
            <person name="Bangert S."/>
            <person name="Wiedelmann R."/>
            <person name="Kranz H."/>
            <person name="Voss H."/>
            <person name="Holland R."/>
            <person name="Brandt P."/>
            <person name="Nyakatura G."/>
            <person name="Vezzi A."/>
            <person name="D'Angelo M."/>
            <person name="Pallavicini A."/>
            <person name="Toppo S."/>
            <person name="Simionati B."/>
            <person name="Conrad A."/>
            <person name="Hornischer K."/>
            <person name="Kauer G."/>
            <person name="Loehnert T.-H."/>
            <person name="Nordsiek G."/>
            <person name="Reichelt J."/>
            <person name="Scharfe M."/>
            <person name="Schoen O."/>
            <person name="Bargues M."/>
            <person name="Terol J."/>
            <person name="Climent J."/>
            <person name="Navarro P."/>
            <person name="Collado C."/>
            <person name="Perez-Perez A."/>
            <person name="Ottenwaelder B."/>
            <person name="Duchemin D."/>
            <person name="Cooke R."/>
            <person name="Laudie M."/>
            <person name="Berger-Llauro C."/>
            <person name="Purnelle B."/>
            <person name="Masuy D."/>
            <person name="de Haan M."/>
            <person name="Maarse A.C."/>
            <person name="Alcaraz J.-P."/>
            <person name="Cottet A."/>
            <person name="Casacuberta E."/>
            <person name="Monfort A."/>
            <person name="Argiriou A."/>
            <person name="Flores M."/>
            <person name="Liguori R."/>
            <person name="Vitale D."/>
            <person name="Mannhaupt G."/>
            <person name="Haase D."/>
            <person name="Schoof H."/>
            <person name="Rudd S."/>
            <person name="Zaccaria P."/>
            <person name="Mewes H.-W."/>
            <person name="Mayer K.F.X."/>
            <person name="Kaul S."/>
            <person name="Town C.D."/>
            <person name="Koo H.L."/>
            <person name="Tallon L.J."/>
            <person name="Jenkins J."/>
            <person name="Rooney T."/>
            <person name="Rizzo M."/>
            <person name="Walts A."/>
            <person name="Utterback T."/>
            <person name="Fujii C.Y."/>
            <person name="Shea T.P."/>
            <person name="Creasy T.H."/>
            <person name="Haas B."/>
            <person name="Maiti R."/>
            <person name="Wu D."/>
            <person name="Peterson J."/>
            <person name="Van Aken S."/>
            <person name="Pai G."/>
            <person name="Militscher J."/>
            <person name="Sellers P."/>
            <person name="Gill J.E."/>
            <person name="Feldblyum T.V."/>
            <person name="Preuss D."/>
            <person name="Lin X."/>
            <person name="Nierman W.C."/>
            <person name="Salzberg S.L."/>
            <person name="White O."/>
            <person name="Venter J.C."/>
            <person name="Fraser C.M."/>
            <person name="Kaneko T."/>
            <person name="Nakamura Y."/>
            <person name="Sato S."/>
            <person name="Kato T."/>
            <person name="Asamizu E."/>
            <person name="Sasamoto S."/>
            <person name="Kimura T."/>
            <person name="Idesawa K."/>
            <person name="Kawashima K."/>
            <person name="Kishida Y."/>
            <person name="Kiyokawa C."/>
            <person name="Kohara M."/>
            <person name="Matsumoto M."/>
            <person name="Matsuno A."/>
            <person name="Muraki A."/>
            <person name="Nakayama S."/>
            <person name="Nakazaki N."/>
            <person name="Shinpo S."/>
            <person name="Takeuchi C."/>
            <person name="Wada T."/>
            <person name="Watanabe A."/>
            <person name="Yamada M."/>
            <person name="Yasuda M."/>
            <person name="Tabata S."/>
        </authorList>
    </citation>
    <scope>NUCLEOTIDE SEQUENCE [LARGE SCALE GENOMIC DNA]</scope>
    <source>
        <strain>cv. Columbia</strain>
    </source>
</reference>
<reference key="2">
    <citation type="journal article" date="2017" name="Plant J.">
        <title>Araport11: a complete reannotation of the Arabidopsis thaliana reference genome.</title>
        <authorList>
            <person name="Cheng C.Y."/>
            <person name="Krishnakumar V."/>
            <person name="Chan A.P."/>
            <person name="Thibaud-Nissen F."/>
            <person name="Schobel S."/>
            <person name="Town C.D."/>
        </authorList>
    </citation>
    <scope>GENOME REANNOTATION</scope>
    <source>
        <strain>cv. Columbia</strain>
    </source>
</reference>
<reference key="3">
    <citation type="journal article" date="2003" name="Science">
        <title>Empirical analysis of transcriptional activity in the Arabidopsis genome.</title>
        <authorList>
            <person name="Yamada K."/>
            <person name="Lim J."/>
            <person name="Dale J.M."/>
            <person name="Chen H."/>
            <person name="Shinn P."/>
            <person name="Palm C.J."/>
            <person name="Southwick A.M."/>
            <person name="Wu H.C."/>
            <person name="Kim C.J."/>
            <person name="Nguyen M."/>
            <person name="Pham P.K."/>
            <person name="Cheuk R.F."/>
            <person name="Karlin-Newmann G."/>
            <person name="Liu S.X."/>
            <person name="Lam B."/>
            <person name="Sakano H."/>
            <person name="Wu T."/>
            <person name="Yu G."/>
            <person name="Miranda M."/>
            <person name="Quach H.L."/>
            <person name="Tripp M."/>
            <person name="Chang C.H."/>
            <person name="Lee J.M."/>
            <person name="Toriumi M.J."/>
            <person name="Chan M.M."/>
            <person name="Tang C.C."/>
            <person name="Onodera C.S."/>
            <person name="Deng J.M."/>
            <person name="Akiyama K."/>
            <person name="Ansari Y."/>
            <person name="Arakawa T."/>
            <person name="Banh J."/>
            <person name="Banno F."/>
            <person name="Bowser L."/>
            <person name="Brooks S.Y."/>
            <person name="Carninci P."/>
            <person name="Chao Q."/>
            <person name="Choy N."/>
            <person name="Enju A."/>
            <person name="Goldsmith A.D."/>
            <person name="Gurjal M."/>
            <person name="Hansen N.F."/>
            <person name="Hayashizaki Y."/>
            <person name="Johnson-Hopson C."/>
            <person name="Hsuan V.W."/>
            <person name="Iida K."/>
            <person name="Karnes M."/>
            <person name="Khan S."/>
            <person name="Koesema E."/>
            <person name="Ishida J."/>
            <person name="Jiang P.X."/>
            <person name="Jones T."/>
            <person name="Kawai J."/>
            <person name="Kamiya A."/>
            <person name="Meyers C."/>
            <person name="Nakajima M."/>
            <person name="Narusaka M."/>
            <person name="Seki M."/>
            <person name="Sakurai T."/>
            <person name="Satou M."/>
            <person name="Tamse R."/>
            <person name="Vaysberg M."/>
            <person name="Wallender E.K."/>
            <person name="Wong C."/>
            <person name="Yamamura Y."/>
            <person name="Yuan S."/>
            <person name="Shinozaki K."/>
            <person name="Davis R.W."/>
            <person name="Theologis A."/>
            <person name="Ecker J.R."/>
        </authorList>
    </citation>
    <scope>NUCLEOTIDE SEQUENCE [LARGE SCALE MRNA]</scope>
    <source>
        <strain>cv. Columbia</strain>
    </source>
</reference>
<reference key="4">
    <citation type="submission" date="2004-09" db="EMBL/GenBank/DDBJ databases">
        <title>Large-scale analysis of RIKEN Arabidopsis full-length (RAFL) cDNAs.</title>
        <authorList>
            <person name="Totoki Y."/>
            <person name="Seki M."/>
            <person name="Ishida J."/>
            <person name="Nakajima M."/>
            <person name="Enju A."/>
            <person name="Kamiya A."/>
            <person name="Narusaka M."/>
            <person name="Shin-i T."/>
            <person name="Nakagawa M."/>
            <person name="Sakamoto N."/>
            <person name="Oishi K."/>
            <person name="Kohara Y."/>
            <person name="Kobayashi M."/>
            <person name="Toyoda A."/>
            <person name="Sakaki Y."/>
            <person name="Sakurai T."/>
            <person name="Iida K."/>
            <person name="Akiyama K."/>
            <person name="Satou M."/>
            <person name="Toyoda T."/>
            <person name="Konagaya A."/>
            <person name="Carninci P."/>
            <person name="Kawai J."/>
            <person name="Hayashizaki Y."/>
            <person name="Shinozaki K."/>
        </authorList>
    </citation>
    <scope>NUCLEOTIDE SEQUENCE [LARGE SCALE MRNA]</scope>
    <source>
        <strain>cv. Columbia</strain>
    </source>
</reference>
<reference key="5">
    <citation type="journal article" date="2017" name="Front. Plant Sci.">
        <title>RPS9M, a mitochondrial ribosomal protein, is essential for central cell maturation and endosperm development in Arabidopsis.</title>
        <authorList>
            <person name="Lu C."/>
            <person name="Yu F."/>
            <person name="Tian L."/>
            <person name="Huang X."/>
            <person name="Tan H."/>
            <person name="Xie Z."/>
            <person name="Hao X."/>
            <person name="Li D."/>
            <person name="Luan S."/>
            <person name="Chen L."/>
        </authorList>
    </citation>
    <scope>FUNCTION</scope>
    <scope>INTERACTION WITH PIA2</scope>
    <scope>SUBCELLULAR LOCATION</scope>
    <scope>TISSUE SPECIFICITY</scope>
    <scope>DEVELOPMENTAL STAGE</scope>
    <scope>DISRUPTION PHENOTYPE</scope>
</reference>
<reference key="6">
    <citation type="journal article" date="2023" name="Plant Cell">
        <title>An updated nomenclature for plant ribosomal protein genes.</title>
        <authorList>
            <person name="Scarpin M.R."/>
            <person name="Busche M."/>
            <person name="Martinez R.E."/>
            <person name="Harper L.C."/>
            <person name="Reiser L."/>
            <person name="Szakonyi D."/>
            <person name="Merchante C."/>
            <person name="Lan T."/>
            <person name="Xiong W."/>
            <person name="Mo B."/>
            <person name="Tang G."/>
            <person name="Chen X."/>
            <person name="Bailey-Serres J."/>
            <person name="Browning K.S."/>
            <person name="Brunkard J.O."/>
        </authorList>
    </citation>
    <scope>NOMENCLATURE</scope>
</reference>
<sequence>MLSRLFLRHSNLRFVTLVSSKSNSQIFSSFIRPLSTNSSGGGGNGDGNGRNRNDVPWSFTGVNDDKSGPFSSDDSFGSSGVAGSGLPGGEGKWPEEPKRWNIKEEEEKVVFDTGGEVGQGIETSRERRGNEWEETKRWDMKEGEEKVVFGGGGDEVDGFGIRGEVKSNEWDVSKPWNLKEEEEGVVFDTGGEVPFSFENSLEMAEEERVKKELIEKEEKELLEVIKGPDRAFGDLIAKSGITDEMLDSLIALKDFQGVEGLPPLTEIENLRREKSSKKSSRAEIELQMQEDIAKARVRQVDETGRAYGTGRRKCSIARVWIQPGEGKFQVNEKEFDVYFPMLDHRAALLRPLAETKTLGRWDIKCTVKGGGTTGQVGAIQLGISRALQNWEPDMRTSLRAAGFLTRDSRVVERKKPGKAKARKSFQWVKR</sequence>
<keyword id="KW-0002">3D-structure</keyword>
<keyword id="KW-0496">Mitochondrion</keyword>
<keyword id="KW-1185">Reference proteome</keyword>
<keyword id="KW-0687">Ribonucleoprotein</keyword>
<keyword id="KW-0689">Ribosomal protein</keyword>
<keyword id="KW-0809">Transit peptide</keyword>
<proteinExistence type="evidence at protein level"/>
<gene>
    <name evidence="4" type="primary">RPS9M</name>
    <name evidence="7" type="ordered locus">At3g49080</name>
    <name evidence="8" type="ORF">T2J13.70</name>
</gene>
<organism>
    <name type="scientific">Arabidopsis thaliana</name>
    <name type="common">Mouse-ear cress</name>
    <dbReference type="NCBI Taxonomy" id="3702"/>
    <lineage>
        <taxon>Eukaryota</taxon>
        <taxon>Viridiplantae</taxon>
        <taxon>Streptophyta</taxon>
        <taxon>Embryophyta</taxon>
        <taxon>Tracheophyta</taxon>
        <taxon>Spermatophyta</taxon>
        <taxon>Magnoliopsida</taxon>
        <taxon>eudicotyledons</taxon>
        <taxon>Gunneridae</taxon>
        <taxon>Pentapetalae</taxon>
        <taxon>rosids</taxon>
        <taxon>malvids</taxon>
        <taxon>Brassicales</taxon>
        <taxon>Brassicaceae</taxon>
        <taxon>Camelineae</taxon>
        <taxon>Arabidopsis</taxon>
    </lineage>
</organism>
<protein>
    <recommendedName>
        <fullName evidence="5">Small ribosomal subunit protein uS9m</fullName>
    </recommendedName>
    <alternativeName>
        <fullName evidence="6">30S ribosomal protein S9, mitochondrial</fullName>
    </alternativeName>
</protein>
<accession>Q8L6Z4</accession>
<accession>Q67Y07</accession>
<accession>Q9SMU6</accession>
<evidence type="ECO:0000255" key="1"/>
<evidence type="ECO:0000256" key="2">
    <source>
        <dbReference type="SAM" id="MobiDB-lite"/>
    </source>
</evidence>
<evidence type="ECO:0000269" key="3">
    <source>
    </source>
</evidence>
<evidence type="ECO:0000303" key="4">
    <source>
    </source>
</evidence>
<evidence type="ECO:0000303" key="5">
    <source>
    </source>
</evidence>
<evidence type="ECO:0000305" key="6"/>
<evidence type="ECO:0000312" key="7">
    <source>
        <dbReference type="Araport" id="AT3G49080"/>
    </source>
</evidence>
<evidence type="ECO:0000312" key="8">
    <source>
        <dbReference type="EMBL" id="CAB62001.1"/>
    </source>
</evidence>
<comment type="function">
    <text evidence="3">Mitochondrial ribosomal protein required for central cell maturation. May work together with PIA2 in controlling female gametophyte development, possibly by regulating the expression of some mitochondrial proteins.</text>
</comment>
<comment type="subunit">
    <text evidence="3 6">Interacts (via C terminus) with PIA2. Component of the mitochondrial ribosome small subunit (Probable).</text>
</comment>
<comment type="subcellular location">
    <subcellularLocation>
        <location evidence="3">Mitochondrion</location>
    </subcellularLocation>
</comment>
<comment type="tissue specificity">
    <text evidence="3">Expressed in root tips, young leaves, flowers and siliques.</text>
</comment>
<comment type="developmental stage">
    <text evidence="3">In anthers, expressed throughout the developmental stages, especially in the mature pollen grains. In pistils, expressed in the mature female gametophyte stage and during fertilization.</text>
</comment>
<comment type="disruption phenotype">
    <text evidence="3">Aborted ovule development due to defects in fusion of polar nuclei and central cell maturation.</text>
</comment>
<comment type="similarity">
    <text evidence="6">Belongs to the universal ribosomal protein uS9 family.</text>
</comment>
<comment type="sequence caution" evidence="6">
    <conflict type="erroneous gene model prediction">
        <sequence resource="EMBL-CDS" id="CAB62001"/>
    </conflict>
</comment>
<name>RPS9M_ARATH</name>
<dbReference type="EMBL" id="AL132967">
    <property type="protein sequence ID" value="CAB62001.1"/>
    <property type="status" value="ALT_SEQ"/>
    <property type="molecule type" value="Genomic_DNA"/>
</dbReference>
<dbReference type="EMBL" id="CP002686">
    <property type="protein sequence ID" value="AEE78497.1"/>
    <property type="molecule type" value="Genomic_DNA"/>
</dbReference>
<dbReference type="EMBL" id="AY140063">
    <property type="protein sequence ID" value="AAM98204.1"/>
    <property type="molecule type" value="mRNA"/>
</dbReference>
<dbReference type="EMBL" id="BT006583">
    <property type="protein sequence ID" value="AAP31927.1"/>
    <property type="molecule type" value="mRNA"/>
</dbReference>
<dbReference type="EMBL" id="AK176622">
    <property type="protein sequence ID" value="BAD44385.1"/>
    <property type="molecule type" value="mRNA"/>
</dbReference>
<dbReference type="EMBL" id="AK176661">
    <property type="protein sequence ID" value="BAD44424.1"/>
    <property type="molecule type" value="mRNA"/>
</dbReference>
<dbReference type="PIR" id="T46121">
    <property type="entry name" value="T46121"/>
</dbReference>
<dbReference type="RefSeq" id="NP_190477.2">
    <property type="nucleotide sequence ID" value="NM_114767.4"/>
</dbReference>
<dbReference type="PDB" id="6XYW">
    <property type="method" value="EM"/>
    <property type="resolution" value="3.86 A"/>
    <property type="chains" value="Bh=1-430"/>
</dbReference>
<dbReference type="PDBsum" id="6XYW"/>
<dbReference type="EMDB" id="EMD-10654"/>
<dbReference type="SMR" id="Q8L6Z4"/>
<dbReference type="FunCoup" id="Q8L6Z4">
    <property type="interactions" value="1230"/>
</dbReference>
<dbReference type="IntAct" id="Q8L6Z4">
    <property type="interactions" value="3"/>
</dbReference>
<dbReference type="STRING" id="3702.Q8L6Z4"/>
<dbReference type="PaxDb" id="3702-AT3G49080.1"/>
<dbReference type="ProteomicsDB" id="228236"/>
<dbReference type="EnsemblPlants" id="AT3G49080.1">
    <property type="protein sequence ID" value="AT3G49080.1"/>
    <property type="gene ID" value="AT3G49080"/>
</dbReference>
<dbReference type="GeneID" id="824070"/>
<dbReference type="Gramene" id="AT3G49080.1">
    <property type="protein sequence ID" value="AT3G49080.1"/>
    <property type="gene ID" value="AT3G49080"/>
</dbReference>
<dbReference type="KEGG" id="ath:AT3G49080"/>
<dbReference type="Araport" id="AT3G49080"/>
<dbReference type="TAIR" id="AT3G49080">
    <property type="gene designation" value="RPS9M"/>
</dbReference>
<dbReference type="eggNOG" id="KOG1697">
    <property type="taxonomic scope" value="Eukaryota"/>
</dbReference>
<dbReference type="HOGENOM" id="CLU_046483_5_1_1"/>
<dbReference type="InParanoid" id="Q8L6Z4"/>
<dbReference type="OMA" id="WEETKRW"/>
<dbReference type="OrthoDB" id="10254627at2759"/>
<dbReference type="PhylomeDB" id="Q8L6Z4"/>
<dbReference type="CD-CODE" id="4299E36E">
    <property type="entry name" value="Nucleolus"/>
</dbReference>
<dbReference type="PRO" id="PR:Q8L6Z4"/>
<dbReference type="Proteomes" id="UP000006548">
    <property type="component" value="Chromosome 3"/>
</dbReference>
<dbReference type="ExpressionAtlas" id="Q8L6Z4">
    <property type="expression patterns" value="baseline and differential"/>
</dbReference>
<dbReference type="GO" id="GO:0005829">
    <property type="term" value="C:cytosol"/>
    <property type="evidence" value="ECO:0007005"/>
    <property type="project" value="TAIR"/>
</dbReference>
<dbReference type="GO" id="GO:0005739">
    <property type="term" value="C:mitochondrion"/>
    <property type="evidence" value="ECO:0000314"/>
    <property type="project" value="UniProtKB"/>
</dbReference>
<dbReference type="GO" id="GO:1990904">
    <property type="term" value="C:ribonucleoprotein complex"/>
    <property type="evidence" value="ECO:0007669"/>
    <property type="project" value="UniProtKB-KW"/>
</dbReference>
<dbReference type="GO" id="GO:0005840">
    <property type="term" value="C:ribosome"/>
    <property type="evidence" value="ECO:0007669"/>
    <property type="project" value="UniProtKB-KW"/>
</dbReference>
<dbReference type="GO" id="GO:0003735">
    <property type="term" value="F:structural constituent of ribosome"/>
    <property type="evidence" value="ECO:0007669"/>
    <property type="project" value="InterPro"/>
</dbReference>
<dbReference type="GO" id="GO:0009559">
    <property type="term" value="P:embryo sac central cell differentiation"/>
    <property type="evidence" value="ECO:0000315"/>
    <property type="project" value="TAIR"/>
</dbReference>
<dbReference type="GO" id="GO:0048229">
    <property type="term" value="P:gametophyte development"/>
    <property type="evidence" value="ECO:0000315"/>
    <property type="project" value="UniProtKB"/>
</dbReference>
<dbReference type="GO" id="GO:0009555">
    <property type="term" value="P:pollen development"/>
    <property type="evidence" value="ECO:0000315"/>
    <property type="project" value="TAIR"/>
</dbReference>
<dbReference type="GO" id="GO:0006412">
    <property type="term" value="P:translation"/>
    <property type="evidence" value="ECO:0007669"/>
    <property type="project" value="InterPro"/>
</dbReference>
<dbReference type="FunFam" id="3.30.230.10:FF:000034">
    <property type="entry name" value="30S ribosomal protein S9"/>
    <property type="match status" value="1"/>
</dbReference>
<dbReference type="Gene3D" id="3.30.230.10">
    <property type="match status" value="1"/>
</dbReference>
<dbReference type="HAMAP" id="MF_00532_B">
    <property type="entry name" value="Ribosomal_uS9_B"/>
    <property type="match status" value="1"/>
</dbReference>
<dbReference type="InterPro" id="IPR020568">
    <property type="entry name" value="Ribosomal_Su5_D2-typ_SF"/>
</dbReference>
<dbReference type="InterPro" id="IPR000754">
    <property type="entry name" value="Ribosomal_uS9"/>
</dbReference>
<dbReference type="InterPro" id="IPR023035">
    <property type="entry name" value="Ribosomal_uS9_bac/plastid"/>
</dbReference>
<dbReference type="InterPro" id="IPR020574">
    <property type="entry name" value="Ribosomal_uS9_CS"/>
</dbReference>
<dbReference type="InterPro" id="IPR014721">
    <property type="entry name" value="Ribsml_uS5_D2-typ_fold_subgr"/>
</dbReference>
<dbReference type="NCBIfam" id="NF001099">
    <property type="entry name" value="PRK00132.1"/>
    <property type="match status" value="1"/>
</dbReference>
<dbReference type="PANTHER" id="PTHR21569">
    <property type="entry name" value="RIBOSOMAL PROTEIN S9"/>
    <property type="match status" value="1"/>
</dbReference>
<dbReference type="PANTHER" id="PTHR21569:SF1">
    <property type="entry name" value="SMALL RIBOSOMAL SUBUNIT PROTEIN US9M"/>
    <property type="match status" value="1"/>
</dbReference>
<dbReference type="Pfam" id="PF00380">
    <property type="entry name" value="Ribosomal_S9"/>
    <property type="match status" value="1"/>
</dbReference>
<dbReference type="SUPFAM" id="SSF54211">
    <property type="entry name" value="Ribosomal protein S5 domain 2-like"/>
    <property type="match status" value="1"/>
</dbReference>
<dbReference type="PROSITE" id="PS00360">
    <property type="entry name" value="RIBOSOMAL_S9"/>
    <property type="match status" value="1"/>
</dbReference>